<sequence>MGFTDETVRFNLNDGDKDEISNTLTNVYRSLAEKGYNPINQIVGYVLSGDPAYVPRYNDARNQIRKYERDEIVEELVRYYLKGNGTDL</sequence>
<organism>
    <name type="scientific">Streptococcus thermophilus (strain CNRZ 1066)</name>
    <dbReference type="NCBI Taxonomy" id="299768"/>
    <lineage>
        <taxon>Bacteria</taxon>
        <taxon>Bacillati</taxon>
        <taxon>Bacillota</taxon>
        <taxon>Bacilli</taxon>
        <taxon>Lactobacillales</taxon>
        <taxon>Streptococcaceae</taxon>
        <taxon>Streptococcus</taxon>
    </lineage>
</organism>
<proteinExistence type="inferred from homology"/>
<comment type="similarity">
    <text evidence="1">Belongs to the UPF0297 family.</text>
</comment>
<accession>Q5LXP1</accession>
<dbReference type="EMBL" id="CP000024">
    <property type="protein sequence ID" value="AAV63471.1"/>
    <property type="molecule type" value="Genomic_DNA"/>
</dbReference>
<dbReference type="RefSeq" id="WP_002952186.1">
    <property type="nucleotide sequence ID" value="NC_006449.1"/>
</dbReference>
<dbReference type="SMR" id="Q5LXP1"/>
<dbReference type="KEGG" id="stc:str1959"/>
<dbReference type="HOGENOM" id="CLU_162466_0_0_9"/>
<dbReference type="HAMAP" id="MF_01507">
    <property type="entry name" value="UPF0297"/>
    <property type="match status" value="1"/>
</dbReference>
<dbReference type="InterPro" id="IPR009309">
    <property type="entry name" value="IreB"/>
</dbReference>
<dbReference type="NCBIfam" id="NF003997">
    <property type="entry name" value="PRK05473.1"/>
    <property type="match status" value="1"/>
</dbReference>
<dbReference type="PANTHER" id="PTHR40067">
    <property type="entry name" value="UPF0297 PROTEIN YRZL"/>
    <property type="match status" value="1"/>
</dbReference>
<dbReference type="PANTHER" id="PTHR40067:SF1">
    <property type="entry name" value="UPF0297 PROTEIN YRZL"/>
    <property type="match status" value="1"/>
</dbReference>
<dbReference type="Pfam" id="PF06135">
    <property type="entry name" value="IreB"/>
    <property type="match status" value="1"/>
</dbReference>
<dbReference type="PIRSF" id="PIRSF037258">
    <property type="entry name" value="DUF965_bac"/>
    <property type="match status" value="1"/>
</dbReference>
<protein>
    <recommendedName>
        <fullName evidence="1">UPF0297 protein str1959</fullName>
    </recommendedName>
</protein>
<evidence type="ECO:0000255" key="1">
    <source>
        <dbReference type="HAMAP-Rule" id="MF_01507"/>
    </source>
</evidence>
<gene>
    <name type="ordered locus">str1959</name>
</gene>
<name>Y1959_STRT1</name>
<feature type="chain" id="PRO_0000216998" description="UPF0297 protein str1959">
    <location>
        <begin position="1"/>
        <end position="88"/>
    </location>
</feature>
<reference key="1">
    <citation type="journal article" date="2004" name="Nat. Biotechnol.">
        <title>Complete sequence and comparative genome analysis of the dairy bacterium Streptococcus thermophilus.</title>
        <authorList>
            <person name="Bolotin A."/>
            <person name="Quinquis B."/>
            <person name="Renault P."/>
            <person name="Sorokin A."/>
            <person name="Ehrlich S.D."/>
            <person name="Kulakauskas S."/>
            <person name="Lapidus A."/>
            <person name="Goltsman E."/>
            <person name="Mazur M."/>
            <person name="Pusch G.D."/>
            <person name="Fonstein M."/>
            <person name="Overbeek R."/>
            <person name="Kyprides N."/>
            <person name="Purnelle B."/>
            <person name="Prozzi D."/>
            <person name="Ngui K."/>
            <person name="Masuy D."/>
            <person name="Hancy F."/>
            <person name="Burteau S."/>
            <person name="Boutry M."/>
            <person name="Delcour J."/>
            <person name="Goffeau A."/>
            <person name="Hols P."/>
        </authorList>
    </citation>
    <scope>NUCLEOTIDE SEQUENCE [LARGE SCALE GENOMIC DNA]</scope>
    <source>
        <strain>CNRZ 1066</strain>
    </source>
</reference>